<proteinExistence type="inferred from homology"/>
<organism>
    <name type="scientific">Schizosaccharomyces pombe (strain 972 / ATCC 24843)</name>
    <name type="common">Fission yeast</name>
    <dbReference type="NCBI Taxonomy" id="284812"/>
    <lineage>
        <taxon>Eukaryota</taxon>
        <taxon>Fungi</taxon>
        <taxon>Dikarya</taxon>
        <taxon>Ascomycota</taxon>
        <taxon>Taphrinomycotina</taxon>
        <taxon>Schizosaccharomycetes</taxon>
        <taxon>Schizosaccharomycetales</taxon>
        <taxon>Schizosaccharomycetaceae</taxon>
        <taxon>Schizosaccharomyces</taxon>
    </lineage>
</organism>
<dbReference type="EMBL" id="CU329671">
    <property type="protein sequence ID" value="CAB38603.1"/>
    <property type="molecule type" value="Genomic_DNA"/>
</dbReference>
<dbReference type="PIR" id="T40425">
    <property type="entry name" value="T40425"/>
</dbReference>
<dbReference type="RefSeq" id="NP_596307.1">
    <property type="nucleotide sequence ID" value="NM_001022229.2"/>
</dbReference>
<dbReference type="SMR" id="O94655"/>
<dbReference type="BioGRID" id="277283">
    <property type="interactions" value="4"/>
</dbReference>
<dbReference type="FunCoup" id="O94655">
    <property type="interactions" value="603"/>
</dbReference>
<dbReference type="STRING" id="284812.O94655"/>
<dbReference type="iPTMnet" id="O94655"/>
<dbReference type="PaxDb" id="4896-SPBC405.04c.1"/>
<dbReference type="EnsemblFungi" id="SPBC405.04c.1">
    <property type="protein sequence ID" value="SPBC405.04c.1:pep"/>
    <property type="gene ID" value="SPBC405.04c"/>
</dbReference>
<dbReference type="GeneID" id="2540763"/>
<dbReference type="KEGG" id="spo:2540763"/>
<dbReference type="PomBase" id="SPBC405.04c">
    <property type="gene designation" value="ypt7"/>
</dbReference>
<dbReference type="VEuPathDB" id="FungiDB:SPBC405.04c"/>
<dbReference type="eggNOG" id="KOG0394">
    <property type="taxonomic scope" value="Eukaryota"/>
</dbReference>
<dbReference type="HOGENOM" id="CLU_041217_10_6_1"/>
<dbReference type="InParanoid" id="O94655"/>
<dbReference type="OMA" id="TSWKDEF"/>
<dbReference type="PhylomeDB" id="O94655"/>
<dbReference type="Reactome" id="R-SPO-6798695">
    <property type="pathway name" value="Neutrophil degranulation"/>
</dbReference>
<dbReference type="Reactome" id="R-SPO-8854214">
    <property type="pathway name" value="TBC/RABGAPs"/>
</dbReference>
<dbReference type="Reactome" id="R-SPO-8873719">
    <property type="pathway name" value="RAB geranylgeranylation"/>
</dbReference>
<dbReference type="Reactome" id="R-SPO-9013405">
    <property type="pathway name" value="RHOD GTPase cycle"/>
</dbReference>
<dbReference type="Reactome" id="R-SPO-9013406">
    <property type="pathway name" value="RHOQ GTPase cycle"/>
</dbReference>
<dbReference type="PRO" id="PR:O94655"/>
<dbReference type="Proteomes" id="UP000002485">
    <property type="component" value="Chromosome II"/>
</dbReference>
<dbReference type="GO" id="GO:0005829">
    <property type="term" value="C:cytosol"/>
    <property type="evidence" value="ECO:0007005"/>
    <property type="project" value="PomBase"/>
</dbReference>
<dbReference type="GO" id="GO:0000329">
    <property type="term" value="C:fungal-type vacuole membrane"/>
    <property type="evidence" value="ECO:0000314"/>
    <property type="project" value="PomBase"/>
</dbReference>
<dbReference type="GO" id="GO:0005770">
    <property type="term" value="C:late endosome"/>
    <property type="evidence" value="ECO:0000318"/>
    <property type="project" value="GO_Central"/>
</dbReference>
<dbReference type="GO" id="GO:0005774">
    <property type="term" value="C:vacuolar membrane"/>
    <property type="evidence" value="ECO:0000269"/>
    <property type="project" value="PomBase"/>
</dbReference>
<dbReference type="GO" id="GO:0005773">
    <property type="term" value="C:vacuole"/>
    <property type="evidence" value="ECO:0000318"/>
    <property type="project" value="GO_Central"/>
</dbReference>
<dbReference type="GO" id="GO:0005525">
    <property type="term" value="F:GTP binding"/>
    <property type="evidence" value="ECO:0007669"/>
    <property type="project" value="UniProtKB-KW"/>
</dbReference>
<dbReference type="GO" id="GO:0003924">
    <property type="term" value="F:GTPase activity"/>
    <property type="evidence" value="ECO:0000304"/>
    <property type="project" value="PomBase"/>
</dbReference>
<dbReference type="GO" id="GO:0006897">
    <property type="term" value="P:endocytosis"/>
    <property type="evidence" value="ECO:0000315"/>
    <property type="project" value="PomBase"/>
</dbReference>
<dbReference type="GO" id="GO:0006896">
    <property type="term" value="P:Golgi to vacuole transport"/>
    <property type="evidence" value="ECO:0000250"/>
    <property type="project" value="PomBase"/>
</dbReference>
<dbReference type="GO" id="GO:0006886">
    <property type="term" value="P:intracellular protein transport"/>
    <property type="evidence" value="ECO:0000305"/>
    <property type="project" value="PomBase"/>
</dbReference>
<dbReference type="GO" id="GO:0061191">
    <property type="term" value="P:positive regulation of vacuole fusion, non-autophagic"/>
    <property type="evidence" value="ECO:0000315"/>
    <property type="project" value="PomBase"/>
</dbReference>
<dbReference type="GO" id="GO:0032889">
    <property type="term" value="P:regulation of vacuole fusion, non-autophagic"/>
    <property type="evidence" value="ECO:0000318"/>
    <property type="project" value="GO_Central"/>
</dbReference>
<dbReference type="GO" id="GO:0023052">
    <property type="term" value="P:signaling"/>
    <property type="evidence" value="ECO:0000303"/>
    <property type="project" value="PomBase"/>
</dbReference>
<dbReference type="GO" id="GO:0042144">
    <property type="term" value="P:vacuole fusion, non-autophagic"/>
    <property type="evidence" value="ECO:0000315"/>
    <property type="project" value="PomBase"/>
</dbReference>
<dbReference type="CDD" id="cd01862">
    <property type="entry name" value="Rab7"/>
    <property type="match status" value="1"/>
</dbReference>
<dbReference type="FunFam" id="3.40.50.300:FF:000086">
    <property type="entry name" value="Ras-related small GTPase"/>
    <property type="match status" value="1"/>
</dbReference>
<dbReference type="Gene3D" id="3.40.50.300">
    <property type="entry name" value="P-loop containing nucleotide triphosphate hydrolases"/>
    <property type="match status" value="1"/>
</dbReference>
<dbReference type="InterPro" id="IPR027417">
    <property type="entry name" value="P-loop_NTPase"/>
</dbReference>
<dbReference type="InterPro" id="IPR005225">
    <property type="entry name" value="Small_GTP-bd"/>
</dbReference>
<dbReference type="InterPro" id="IPR001806">
    <property type="entry name" value="Small_GTPase"/>
</dbReference>
<dbReference type="NCBIfam" id="TIGR00231">
    <property type="entry name" value="small_GTP"/>
    <property type="match status" value="1"/>
</dbReference>
<dbReference type="PANTHER" id="PTHR47981">
    <property type="entry name" value="RAB FAMILY"/>
    <property type="match status" value="1"/>
</dbReference>
<dbReference type="PANTHER" id="PTHR47981:SF20">
    <property type="entry name" value="RAS-RELATED PROTEIN RAB-7A"/>
    <property type="match status" value="1"/>
</dbReference>
<dbReference type="Pfam" id="PF00071">
    <property type="entry name" value="Ras"/>
    <property type="match status" value="1"/>
</dbReference>
<dbReference type="PRINTS" id="PR00449">
    <property type="entry name" value="RASTRNSFRMNG"/>
</dbReference>
<dbReference type="SMART" id="SM00175">
    <property type="entry name" value="RAB"/>
    <property type="match status" value="1"/>
</dbReference>
<dbReference type="SMART" id="SM00176">
    <property type="entry name" value="RAN"/>
    <property type="match status" value="1"/>
</dbReference>
<dbReference type="SMART" id="SM00173">
    <property type="entry name" value="RAS"/>
    <property type="match status" value="1"/>
</dbReference>
<dbReference type="SMART" id="SM00174">
    <property type="entry name" value="RHO"/>
    <property type="match status" value="1"/>
</dbReference>
<dbReference type="SUPFAM" id="SSF52540">
    <property type="entry name" value="P-loop containing nucleoside triphosphate hydrolases"/>
    <property type="match status" value="1"/>
</dbReference>
<dbReference type="PROSITE" id="PS51419">
    <property type="entry name" value="RAB"/>
    <property type="match status" value="1"/>
</dbReference>
<keyword id="KW-0342">GTP-binding</keyword>
<keyword id="KW-0449">Lipoprotein</keyword>
<keyword id="KW-0472">Membrane</keyword>
<keyword id="KW-0488">Methylation</keyword>
<keyword id="KW-0547">Nucleotide-binding</keyword>
<keyword id="KW-0636">Prenylation</keyword>
<keyword id="KW-0653">Protein transport</keyword>
<keyword id="KW-1185">Reference proteome</keyword>
<keyword id="KW-0813">Transport</keyword>
<keyword id="KW-0926">Vacuole</keyword>
<protein>
    <recommendedName>
        <fullName>Ypt/Rab-type GTPase ypt7</fullName>
    </recommendedName>
</protein>
<reference key="1">
    <citation type="journal article" date="2002" name="Nature">
        <title>The genome sequence of Schizosaccharomyces pombe.</title>
        <authorList>
            <person name="Wood V."/>
            <person name="Gwilliam R."/>
            <person name="Rajandream M.A."/>
            <person name="Lyne M.H."/>
            <person name="Lyne R."/>
            <person name="Stewart A."/>
            <person name="Sgouros J.G."/>
            <person name="Peat N."/>
            <person name="Hayles J."/>
            <person name="Baker S.G."/>
            <person name="Basham D."/>
            <person name="Bowman S."/>
            <person name="Brooks K."/>
            <person name="Brown D."/>
            <person name="Brown S."/>
            <person name="Chillingworth T."/>
            <person name="Churcher C.M."/>
            <person name="Collins M."/>
            <person name="Connor R."/>
            <person name="Cronin A."/>
            <person name="Davis P."/>
            <person name="Feltwell T."/>
            <person name="Fraser A."/>
            <person name="Gentles S."/>
            <person name="Goble A."/>
            <person name="Hamlin N."/>
            <person name="Harris D.E."/>
            <person name="Hidalgo J."/>
            <person name="Hodgson G."/>
            <person name="Holroyd S."/>
            <person name="Hornsby T."/>
            <person name="Howarth S."/>
            <person name="Huckle E.J."/>
            <person name="Hunt S."/>
            <person name="Jagels K."/>
            <person name="James K.D."/>
            <person name="Jones L."/>
            <person name="Jones M."/>
            <person name="Leather S."/>
            <person name="McDonald S."/>
            <person name="McLean J."/>
            <person name="Mooney P."/>
            <person name="Moule S."/>
            <person name="Mungall K.L."/>
            <person name="Murphy L.D."/>
            <person name="Niblett D."/>
            <person name="Odell C."/>
            <person name="Oliver K."/>
            <person name="O'Neil S."/>
            <person name="Pearson D."/>
            <person name="Quail M.A."/>
            <person name="Rabbinowitsch E."/>
            <person name="Rutherford K.M."/>
            <person name="Rutter S."/>
            <person name="Saunders D."/>
            <person name="Seeger K."/>
            <person name="Sharp S."/>
            <person name="Skelton J."/>
            <person name="Simmonds M.N."/>
            <person name="Squares R."/>
            <person name="Squares S."/>
            <person name="Stevens K."/>
            <person name="Taylor K."/>
            <person name="Taylor R.G."/>
            <person name="Tivey A."/>
            <person name="Walsh S.V."/>
            <person name="Warren T."/>
            <person name="Whitehead S."/>
            <person name="Woodward J.R."/>
            <person name="Volckaert G."/>
            <person name="Aert R."/>
            <person name="Robben J."/>
            <person name="Grymonprez B."/>
            <person name="Weltjens I."/>
            <person name="Vanstreels E."/>
            <person name="Rieger M."/>
            <person name="Schaefer M."/>
            <person name="Mueller-Auer S."/>
            <person name="Gabel C."/>
            <person name="Fuchs M."/>
            <person name="Duesterhoeft A."/>
            <person name="Fritzc C."/>
            <person name="Holzer E."/>
            <person name="Moestl D."/>
            <person name="Hilbert H."/>
            <person name="Borzym K."/>
            <person name="Langer I."/>
            <person name="Beck A."/>
            <person name="Lehrach H."/>
            <person name="Reinhardt R."/>
            <person name="Pohl T.M."/>
            <person name="Eger P."/>
            <person name="Zimmermann W."/>
            <person name="Wedler H."/>
            <person name="Wambutt R."/>
            <person name="Purnelle B."/>
            <person name="Goffeau A."/>
            <person name="Cadieu E."/>
            <person name="Dreano S."/>
            <person name="Gloux S."/>
            <person name="Lelaure V."/>
            <person name="Mottier S."/>
            <person name="Galibert F."/>
            <person name="Aves S.J."/>
            <person name="Xiang Z."/>
            <person name="Hunt C."/>
            <person name="Moore K."/>
            <person name="Hurst S.M."/>
            <person name="Lucas M."/>
            <person name="Rochet M."/>
            <person name="Gaillardin C."/>
            <person name="Tallada V.A."/>
            <person name="Garzon A."/>
            <person name="Thode G."/>
            <person name="Daga R.R."/>
            <person name="Cruzado L."/>
            <person name="Jimenez J."/>
            <person name="Sanchez M."/>
            <person name="del Rey F."/>
            <person name="Benito J."/>
            <person name="Dominguez A."/>
            <person name="Revuelta J.L."/>
            <person name="Moreno S."/>
            <person name="Armstrong J."/>
            <person name="Forsburg S.L."/>
            <person name="Cerutti L."/>
            <person name="Lowe T."/>
            <person name="McCombie W.R."/>
            <person name="Paulsen I."/>
            <person name="Potashkin J."/>
            <person name="Shpakovski G.V."/>
            <person name="Ussery D."/>
            <person name="Barrell B.G."/>
            <person name="Nurse P."/>
        </authorList>
    </citation>
    <scope>NUCLEOTIDE SEQUENCE [LARGE SCALE GENOMIC DNA]</scope>
    <source>
        <strain>972 / ATCC 24843</strain>
    </source>
</reference>
<reference key="2">
    <citation type="journal article" date="1998" name="Curr. Biol.">
        <title>Regulated vacuole fusion and fission in Schizosaccharomyces pombe: an osmotic response dependent on MAP kinases.</title>
        <authorList>
            <person name="Bone N."/>
            <person name="Millar J.B.A."/>
            <person name="Toda T."/>
            <person name="Armstrong J."/>
        </authorList>
    </citation>
    <scope>NUCLEOTIDE SEQUENCE [GENOMIC DNA] OF 20-190</scope>
    <scope>FUNCTION</scope>
</reference>
<reference key="3">
    <citation type="journal article" date="2005" name="Cell Struct. Funct.">
        <title>A role for fission yeast Rab GTPase Ypt7p in sporulation.</title>
        <authorList>
            <person name="Kashiwazaki J."/>
            <person name="Nakamura T."/>
            <person name="Iwaki T."/>
            <person name="Takegawa K."/>
            <person name="Shimoda C."/>
        </authorList>
    </citation>
    <scope>FUNCTION</scope>
    <scope>DISRUPTION PHENOTYPE</scope>
</reference>
<reference key="4">
    <citation type="journal article" date="2009" name="Traffic">
        <title>Two fission yeast rab7 homologs, ypt7 and ypt71, play antagonistic roles in the regulation of vacuolar morphology.</title>
        <authorList>
            <person name="Kashiwazaki J."/>
            <person name="Iwaki T."/>
            <person name="Takegawa K."/>
            <person name="Shimoda C."/>
            <person name="Nakamura T."/>
        </authorList>
    </citation>
    <scope>FUNCTION</scope>
</reference>
<name>YPT7_SCHPO</name>
<gene>
    <name type="primary">ypt7</name>
    <name type="ORF">SPBC405.04c</name>
</gene>
<comment type="function">
    <text evidence="1 3 4 5">Ypt/Rab-type GTPases are key regulators of membrane trafficking and intracellular vesicular transport. They act as molecular switches that convert between GTP-bound and GDP-bound states, and regulate virtually all steps of membrane traffic from the formation of the transport vesicle at the donor membrane to its fusion at the target membrane. In the GDP-bound state, Ypt proteins are predominantly cytosolic, solubilized through the interaction with a GDP dissociation inhibitor (GDI). In the GTP-bound state, the proteins are membrane bound and interact with specific effector proteins that select cargo, promote vesicle movement, or verify the correct site of fusion (By similarity). Ypt7 is necessary for trafficking from the endosome to the vacuole and for homotypic vacuole fusion (PubMed:19453973, PubMed:9443913). Plays an important role in sporulation (PubMed:16357443).</text>
</comment>
<comment type="activity regulation">
    <text evidence="1">Rab activation is generally mediated by a guanine exchange factor (GEF), while inactivation through hydrolysis of bound GTP is catalyzed by a GTPase activating protein (GAP).</text>
</comment>
<comment type="subcellular location">
    <subcellularLocation>
        <location evidence="1">Vacuole membrane</location>
    </subcellularLocation>
</comment>
<comment type="disruption phenotype">
    <text evidence="3">Asci produce less than 4 spores, which are immature and germinate at low frequency. Cells are defective in development of the forespore membranes.</text>
</comment>
<comment type="similarity">
    <text evidence="6">Belongs to the small GTPase superfamily. Rab family.</text>
</comment>
<evidence type="ECO:0000250" key="1">
    <source>
        <dbReference type="UniProtKB" id="P32939"/>
    </source>
</evidence>
<evidence type="ECO:0000250" key="2">
    <source>
        <dbReference type="UniProtKB" id="P36586"/>
    </source>
</evidence>
<evidence type="ECO:0000269" key="3">
    <source>
    </source>
</evidence>
<evidence type="ECO:0000269" key="4">
    <source>
    </source>
</evidence>
<evidence type="ECO:0000269" key="5">
    <source>
    </source>
</evidence>
<evidence type="ECO:0000305" key="6"/>
<sequence length="205" mass="22994">MAGKKKHLLKVIILGESGVGKTSIMNQYVNRKFSKDYKATIGADFLTKEVLVDDKVVTLQLWDTAGQERFQSLGVAFYRGADCCVLVYDVNNSKSFETLDSWRDEFLIQASPSNPETFPFILLGNKVDVEEQKRMVSKSKALAFCQARGEIPYFETSAKEAINVQEAFETVAKLALENMDSDDIAADFTDPIHLDMESQKTSCYC</sequence>
<feature type="chain" id="PRO_0000121313" description="Ypt/Rab-type GTPase ypt7">
    <location>
        <begin position="1"/>
        <end position="205"/>
    </location>
</feature>
<feature type="short sequence motif" description="Effector region" evidence="6">
    <location>
        <begin position="37"/>
        <end position="45"/>
    </location>
</feature>
<feature type="binding site" evidence="1">
    <location>
        <begin position="17"/>
        <end position="23"/>
    </location>
    <ligand>
        <name>GTP</name>
        <dbReference type="ChEBI" id="CHEBI:37565"/>
    </ligand>
</feature>
<feature type="binding site" evidence="1">
    <location>
        <begin position="33"/>
        <end position="40"/>
    </location>
    <ligand>
        <name>GTP</name>
        <dbReference type="ChEBI" id="CHEBI:37565"/>
    </ligand>
</feature>
<feature type="binding site" evidence="1">
    <location>
        <position position="66"/>
    </location>
    <ligand>
        <name>GTP</name>
        <dbReference type="ChEBI" id="CHEBI:37565"/>
    </ligand>
</feature>
<feature type="binding site" evidence="1">
    <location>
        <begin position="125"/>
        <end position="128"/>
    </location>
    <ligand>
        <name>GTP</name>
        <dbReference type="ChEBI" id="CHEBI:37565"/>
    </ligand>
</feature>
<feature type="binding site" evidence="1">
    <location>
        <begin position="157"/>
        <end position="159"/>
    </location>
    <ligand>
        <name>GTP</name>
        <dbReference type="ChEBI" id="CHEBI:37565"/>
    </ligand>
</feature>
<feature type="modified residue" description="Cysteine methyl ester" evidence="2">
    <location>
        <position position="205"/>
    </location>
</feature>
<feature type="lipid moiety-binding region" description="S-geranylgeranyl cysteine" evidence="2">
    <location>
        <position position="203"/>
    </location>
</feature>
<feature type="lipid moiety-binding region" description="S-geranylgeranyl cysteine" evidence="2">
    <location>
        <position position="205"/>
    </location>
</feature>
<accession>O94655</accession>